<dbReference type="EC" id="2.6.1.82" evidence="1"/>
<dbReference type="EC" id="2.6.1.29" evidence="1"/>
<dbReference type="EMBL" id="CP000886">
    <property type="protein sequence ID" value="ABX69344.1"/>
    <property type="molecule type" value="Genomic_DNA"/>
</dbReference>
<dbReference type="SMR" id="A9N5Z8"/>
<dbReference type="KEGG" id="spq:SPAB_04016"/>
<dbReference type="PATRIC" id="fig|1016998.12.peg.3785"/>
<dbReference type="HOGENOM" id="CLU_016922_10_0_6"/>
<dbReference type="BioCyc" id="SENT1016998:SPAB_RS16310-MONOMER"/>
<dbReference type="UniPathway" id="UPA00188">
    <property type="reaction ID" value="UER00290"/>
</dbReference>
<dbReference type="Proteomes" id="UP000008556">
    <property type="component" value="Chromosome"/>
</dbReference>
<dbReference type="GO" id="GO:0019161">
    <property type="term" value="F:diamine transaminase activity"/>
    <property type="evidence" value="ECO:0007669"/>
    <property type="project" value="UniProtKB-EC"/>
</dbReference>
<dbReference type="GO" id="GO:0042802">
    <property type="term" value="F:identical protein binding"/>
    <property type="evidence" value="ECO:0007669"/>
    <property type="project" value="TreeGrafter"/>
</dbReference>
<dbReference type="GO" id="GO:0033094">
    <property type="term" value="F:putrescine--2-oxoglutarate transaminase activity"/>
    <property type="evidence" value="ECO:0007669"/>
    <property type="project" value="UniProtKB-UniRule"/>
</dbReference>
<dbReference type="GO" id="GO:0030170">
    <property type="term" value="F:pyridoxal phosphate binding"/>
    <property type="evidence" value="ECO:0007669"/>
    <property type="project" value="UniProtKB-UniRule"/>
</dbReference>
<dbReference type="GO" id="GO:0019477">
    <property type="term" value="P:L-lysine catabolic process"/>
    <property type="evidence" value="ECO:0007669"/>
    <property type="project" value="UniProtKB-UniRule"/>
</dbReference>
<dbReference type="GO" id="GO:0009447">
    <property type="term" value="P:putrescine catabolic process"/>
    <property type="evidence" value="ECO:0007669"/>
    <property type="project" value="UniProtKB-UniRule"/>
</dbReference>
<dbReference type="CDD" id="cd00610">
    <property type="entry name" value="OAT_like"/>
    <property type="match status" value="1"/>
</dbReference>
<dbReference type="FunFam" id="3.40.640.10:FF:000004">
    <property type="entry name" value="Acetylornithine aminotransferase"/>
    <property type="match status" value="1"/>
</dbReference>
<dbReference type="Gene3D" id="3.90.1150.10">
    <property type="entry name" value="Aspartate Aminotransferase, domain 1"/>
    <property type="match status" value="1"/>
</dbReference>
<dbReference type="Gene3D" id="3.40.640.10">
    <property type="entry name" value="Type I PLP-dependent aspartate aminotransferase-like (Major domain)"/>
    <property type="match status" value="1"/>
</dbReference>
<dbReference type="HAMAP" id="MF_01276">
    <property type="entry name" value="Putres_aminotrans_3"/>
    <property type="match status" value="1"/>
</dbReference>
<dbReference type="InterPro" id="IPR005814">
    <property type="entry name" value="Aminotrans_3"/>
</dbReference>
<dbReference type="InterPro" id="IPR049704">
    <property type="entry name" value="Aminotrans_3_PPA_site"/>
</dbReference>
<dbReference type="InterPro" id="IPR050103">
    <property type="entry name" value="Class-III_PLP-dep_AT"/>
</dbReference>
<dbReference type="InterPro" id="IPR017747">
    <property type="entry name" value="Putrescine_aminotransferase"/>
</dbReference>
<dbReference type="InterPro" id="IPR015424">
    <property type="entry name" value="PyrdxlP-dep_Trfase"/>
</dbReference>
<dbReference type="InterPro" id="IPR015421">
    <property type="entry name" value="PyrdxlP-dep_Trfase_major"/>
</dbReference>
<dbReference type="InterPro" id="IPR015422">
    <property type="entry name" value="PyrdxlP-dep_Trfase_small"/>
</dbReference>
<dbReference type="NCBIfam" id="NF008570">
    <property type="entry name" value="PRK11522.1"/>
    <property type="match status" value="1"/>
</dbReference>
<dbReference type="NCBIfam" id="TIGR03372">
    <property type="entry name" value="putres_am_tran"/>
    <property type="match status" value="1"/>
</dbReference>
<dbReference type="PANTHER" id="PTHR11986">
    <property type="entry name" value="AMINOTRANSFERASE CLASS III"/>
    <property type="match status" value="1"/>
</dbReference>
<dbReference type="PANTHER" id="PTHR11986:SF112">
    <property type="entry name" value="PUTRESCINE AMINOTRANSFERASE"/>
    <property type="match status" value="1"/>
</dbReference>
<dbReference type="Pfam" id="PF00202">
    <property type="entry name" value="Aminotran_3"/>
    <property type="match status" value="1"/>
</dbReference>
<dbReference type="PIRSF" id="PIRSF000521">
    <property type="entry name" value="Transaminase_4ab_Lys_Orn"/>
    <property type="match status" value="1"/>
</dbReference>
<dbReference type="SUPFAM" id="SSF53383">
    <property type="entry name" value="PLP-dependent transferases"/>
    <property type="match status" value="1"/>
</dbReference>
<dbReference type="PROSITE" id="PS00600">
    <property type="entry name" value="AA_TRANSFER_CLASS_3"/>
    <property type="match status" value="1"/>
</dbReference>
<name>PAT_SALPB</name>
<comment type="function">
    <text evidence="1">Catalyzes the aminotransferase reaction from putrescine to 2-oxoglutarate, leading to glutamate and 4-aminobutanal, which spontaneously cyclizes to form 1-pyrroline. This is the first step in one of two pathways for putrescine degradation, where putrescine is converted into 4-aminobutanoate (gamma-aminobutyrate or GABA) via 4-aminobutanal. Also functions as a cadaverine transaminase in a a L-lysine degradation pathway to succinate that proceeds via cadaverine, glutarate and L-2-hydroxyglutarate.</text>
</comment>
<comment type="catalytic activity">
    <reaction evidence="1">
        <text>an alkane-alpha,omega-diamine + 2-oxoglutarate = an omega-aminoaldehyde + L-glutamate</text>
        <dbReference type="Rhea" id="RHEA:18217"/>
        <dbReference type="Rhea" id="RHEA-COMP:9766"/>
        <dbReference type="Rhea" id="RHEA-COMP:12750"/>
        <dbReference type="ChEBI" id="CHEBI:16810"/>
        <dbReference type="ChEBI" id="CHEBI:29985"/>
        <dbReference type="ChEBI" id="CHEBI:70977"/>
        <dbReference type="ChEBI" id="CHEBI:133427"/>
        <dbReference type="EC" id="2.6.1.29"/>
    </reaction>
    <physiologicalReaction direction="left-to-right" evidence="1">
        <dbReference type="Rhea" id="RHEA:18218"/>
    </physiologicalReaction>
</comment>
<comment type="catalytic activity">
    <reaction evidence="1">
        <text>putrescine + 2-oxoglutarate = 1-pyrroline + L-glutamate + H2O</text>
        <dbReference type="Rhea" id="RHEA:12268"/>
        <dbReference type="ChEBI" id="CHEBI:15377"/>
        <dbReference type="ChEBI" id="CHEBI:16810"/>
        <dbReference type="ChEBI" id="CHEBI:29985"/>
        <dbReference type="ChEBI" id="CHEBI:36781"/>
        <dbReference type="ChEBI" id="CHEBI:326268"/>
        <dbReference type="EC" id="2.6.1.82"/>
    </reaction>
    <physiologicalReaction direction="left-to-right" evidence="1">
        <dbReference type="Rhea" id="RHEA:12269"/>
    </physiologicalReaction>
</comment>
<comment type="catalytic activity">
    <reaction evidence="1">
        <text>cadaverine + 2-oxoglutarate = 5-aminopentanal + L-glutamate</text>
        <dbReference type="Rhea" id="RHEA:61624"/>
        <dbReference type="ChEBI" id="CHEBI:16810"/>
        <dbReference type="ChEBI" id="CHEBI:29985"/>
        <dbReference type="ChEBI" id="CHEBI:58384"/>
        <dbReference type="ChEBI" id="CHEBI:144896"/>
    </reaction>
    <physiologicalReaction direction="left-to-right" evidence="1">
        <dbReference type="Rhea" id="RHEA:61625"/>
    </physiologicalReaction>
</comment>
<comment type="cofactor">
    <cofactor evidence="1">
        <name>pyridoxal 5'-phosphate</name>
        <dbReference type="ChEBI" id="CHEBI:597326"/>
    </cofactor>
</comment>
<comment type="pathway">
    <text evidence="1">Amine and polyamine degradation; putrescine degradation; 4-aminobutanal from putrescine (transaminase route): step 1/1.</text>
</comment>
<comment type="similarity">
    <text evidence="1">Belongs to the class-III pyridoxal-phosphate-dependent aminotransferase family. Putrescine aminotransferase subfamily.</text>
</comment>
<reference key="1">
    <citation type="submission" date="2007-11" db="EMBL/GenBank/DDBJ databases">
        <authorList>
            <consortium name="The Salmonella enterica serovar Paratyphi B Genome Sequencing Project"/>
            <person name="McClelland M."/>
            <person name="Sanderson E.K."/>
            <person name="Porwollik S."/>
            <person name="Spieth J."/>
            <person name="Clifton W.S."/>
            <person name="Fulton R."/>
            <person name="Cordes M."/>
            <person name="Wollam A."/>
            <person name="Shah N."/>
            <person name="Pepin K."/>
            <person name="Bhonagiri V."/>
            <person name="Nash W."/>
            <person name="Johnson M."/>
            <person name="Thiruvilangam P."/>
            <person name="Wilson R."/>
        </authorList>
    </citation>
    <scope>NUCLEOTIDE SEQUENCE [LARGE SCALE GENOMIC DNA]</scope>
    <source>
        <strain>ATCC BAA-1250 / SPB7</strain>
    </source>
</reference>
<protein>
    <recommendedName>
        <fullName evidence="1">Putrescine aminotransferase</fullName>
        <shortName evidence="1">PAT</shortName>
        <shortName evidence="1">PATase</shortName>
        <ecNumber evidence="1">2.6.1.82</ecNumber>
    </recommendedName>
    <alternativeName>
        <fullName evidence="1">Cadaverine transaminase</fullName>
    </alternativeName>
    <alternativeName>
        <fullName evidence="1">Diamine transaminase</fullName>
        <ecNumber evidence="1">2.6.1.29</ecNumber>
    </alternativeName>
    <alternativeName>
        <fullName evidence="1">Putrescine transaminase</fullName>
    </alternativeName>
    <alternativeName>
        <fullName evidence="1">Putrescine--2-oxoglutaric acid transaminase</fullName>
    </alternativeName>
</protein>
<keyword id="KW-0032">Aminotransferase</keyword>
<keyword id="KW-0663">Pyridoxal phosphate</keyword>
<keyword id="KW-0808">Transferase</keyword>
<sequence length="459" mass="49653">MNRLPSSASALACSAHALNLIEKRTLNHEEMKALNREVIDYFKEHVNPGFLEYRKSVTAGGDYGAVEWQAGSLNTLVDTQGQEFIDCLGGFGIFNVGHRNPVVVSAVQNQLAKQPLHSQELLDPLRAMLAKTLAALAPGKLKYSFFCNSGTESVEAALKLAKAYQSPRGKFTFIATSGAFHGKSLGALSATAKSTFRRPFMPLLPGFRHVPFGNIDAMSMAFSEGKKTGDEIAAVILEPIQGEGGVILPPQGYLTEVRKLCDEFGALMILDEVQTGMGRTGKMFACEHENVQPDILCLAKALGGGVMPIGATIATEEVFSVLFDNPFLHTTTFGGNPLACAAALATINVLLEQNLPAQAEQKGDTLLDGFRQLAREYPNLVHDARGKGMLMAIEFVDNETGYRFASEMFRQRVLVAGTLNNAKTTRIEPPLTLTIELCEQVLKSARNALAAMQVSVEEV</sequence>
<feature type="chain" id="PRO_1000085864" description="Putrescine aminotransferase">
    <location>
        <begin position="1"/>
        <end position="459"/>
    </location>
</feature>
<feature type="binding site" description="in other chain" evidence="1">
    <location>
        <begin position="150"/>
        <end position="151"/>
    </location>
    <ligand>
        <name>pyridoxal 5'-phosphate</name>
        <dbReference type="ChEBI" id="CHEBI:597326"/>
        <note>ligand shared between dimeric partners</note>
    </ligand>
</feature>
<feature type="binding site" description="in other chain" evidence="1">
    <location>
        <position position="274"/>
    </location>
    <ligand>
        <name>pyridoxal 5'-phosphate</name>
        <dbReference type="ChEBI" id="CHEBI:597326"/>
        <note>ligand shared between dimeric partners</note>
    </ligand>
</feature>
<feature type="binding site" evidence="1">
    <location>
        <position position="332"/>
    </location>
    <ligand>
        <name>pyridoxal 5'-phosphate</name>
        <dbReference type="ChEBI" id="CHEBI:597326"/>
        <note>ligand shared between dimeric partners</note>
    </ligand>
</feature>
<feature type="modified residue" description="N6-(pyridoxal phosphate)lysine" evidence="1">
    <location>
        <position position="300"/>
    </location>
</feature>
<proteinExistence type="inferred from homology"/>
<evidence type="ECO:0000255" key="1">
    <source>
        <dbReference type="HAMAP-Rule" id="MF_01276"/>
    </source>
</evidence>
<organism>
    <name type="scientific">Salmonella paratyphi B (strain ATCC BAA-1250 / SPB7)</name>
    <dbReference type="NCBI Taxonomy" id="1016998"/>
    <lineage>
        <taxon>Bacteria</taxon>
        <taxon>Pseudomonadati</taxon>
        <taxon>Pseudomonadota</taxon>
        <taxon>Gammaproteobacteria</taxon>
        <taxon>Enterobacterales</taxon>
        <taxon>Enterobacteriaceae</taxon>
        <taxon>Salmonella</taxon>
    </lineage>
</organism>
<accession>A9N5Z8</accession>
<gene>
    <name evidence="1" type="primary">patA</name>
    <name type="ordered locus">SPAB_04016</name>
</gene>